<gene>
    <name evidence="1" type="primary">hflD</name>
    <name type="ordered locus">Spro_2021</name>
</gene>
<organism>
    <name type="scientific">Serratia proteamaculans (strain 568)</name>
    <dbReference type="NCBI Taxonomy" id="399741"/>
    <lineage>
        <taxon>Bacteria</taxon>
        <taxon>Pseudomonadati</taxon>
        <taxon>Pseudomonadota</taxon>
        <taxon>Gammaproteobacteria</taxon>
        <taxon>Enterobacterales</taxon>
        <taxon>Yersiniaceae</taxon>
        <taxon>Serratia</taxon>
    </lineage>
</organism>
<evidence type="ECO:0000255" key="1">
    <source>
        <dbReference type="HAMAP-Rule" id="MF_00695"/>
    </source>
</evidence>
<feature type="chain" id="PRO_1000062053" description="High frequency lysogenization protein HflD homolog">
    <location>
        <begin position="1"/>
        <end position="208"/>
    </location>
</feature>
<feature type="coiled-coil region" evidence="1">
    <location>
        <begin position="91"/>
        <end position="125"/>
    </location>
</feature>
<comment type="subcellular location">
    <subcellularLocation>
        <location>Cytoplasm</location>
    </subcellularLocation>
    <subcellularLocation>
        <location evidence="1">Cell inner membrane</location>
        <topology evidence="1">Peripheral membrane protein</topology>
        <orientation evidence="1">Cytoplasmic side</orientation>
    </subcellularLocation>
</comment>
<comment type="similarity">
    <text evidence="1">Belongs to the HflD family.</text>
</comment>
<sequence>MAKNYYDITLAMAGISQTARLVQQLAHEGQCDREAFHTSLSSLLQMDPPSTLAVFGGEERNLKMGLETLMGVLNANNKGLAAELTRYTISLMVLERKLNANKQAMNQLGERLGQLERQLAHFDLESDTIISALAGIYVDVVSPLGPRIQVTGSPAILQNPQVQAKVRAALLAGIRAAVLWQQVGGSRLQLMFSRNRLFKQAQNIVAHC</sequence>
<reference key="1">
    <citation type="submission" date="2007-09" db="EMBL/GenBank/DDBJ databases">
        <title>Complete sequence of chromosome of Serratia proteamaculans 568.</title>
        <authorList>
            <consortium name="US DOE Joint Genome Institute"/>
            <person name="Copeland A."/>
            <person name="Lucas S."/>
            <person name="Lapidus A."/>
            <person name="Barry K."/>
            <person name="Glavina del Rio T."/>
            <person name="Dalin E."/>
            <person name="Tice H."/>
            <person name="Pitluck S."/>
            <person name="Chain P."/>
            <person name="Malfatti S."/>
            <person name="Shin M."/>
            <person name="Vergez L."/>
            <person name="Schmutz J."/>
            <person name="Larimer F."/>
            <person name="Land M."/>
            <person name="Hauser L."/>
            <person name="Kyrpides N."/>
            <person name="Kim E."/>
            <person name="Taghavi S."/>
            <person name="Newman L."/>
            <person name="Vangronsveld J."/>
            <person name="van der Lelie D."/>
            <person name="Richardson P."/>
        </authorList>
    </citation>
    <scope>NUCLEOTIDE SEQUENCE [LARGE SCALE GENOMIC DNA]</scope>
    <source>
        <strain>568</strain>
    </source>
</reference>
<protein>
    <recommendedName>
        <fullName evidence="1">High frequency lysogenization protein HflD homolog</fullName>
    </recommendedName>
</protein>
<accession>A8GDD4</accession>
<name>HFLD_SERP5</name>
<dbReference type="EMBL" id="CP000826">
    <property type="protein sequence ID" value="ABV41124.1"/>
    <property type="molecule type" value="Genomic_DNA"/>
</dbReference>
<dbReference type="SMR" id="A8GDD4"/>
<dbReference type="STRING" id="399741.Spro_2021"/>
<dbReference type="KEGG" id="spe:Spro_2021"/>
<dbReference type="eggNOG" id="COG2915">
    <property type="taxonomic scope" value="Bacteria"/>
</dbReference>
<dbReference type="HOGENOM" id="CLU_098920_0_0_6"/>
<dbReference type="OrthoDB" id="9788031at2"/>
<dbReference type="GO" id="GO:0005737">
    <property type="term" value="C:cytoplasm"/>
    <property type="evidence" value="ECO:0007669"/>
    <property type="project" value="UniProtKB-SubCell"/>
</dbReference>
<dbReference type="GO" id="GO:0005886">
    <property type="term" value="C:plasma membrane"/>
    <property type="evidence" value="ECO:0007669"/>
    <property type="project" value="UniProtKB-SubCell"/>
</dbReference>
<dbReference type="FunFam" id="1.10.3890.10:FF:000001">
    <property type="entry name" value="High frequency lysogenization protein HflD homolog"/>
    <property type="match status" value="1"/>
</dbReference>
<dbReference type="Gene3D" id="1.10.3890.10">
    <property type="entry name" value="HflD-like"/>
    <property type="match status" value="1"/>
</dbReference>
<dbReference type="HAMAP" id="MF_00695">
    <property type="entry name" value="HflD_protein"/>
    <property type="match status" value="1"/>
</dbReference>
<dbReference type="InterPro" id="IPR007451">
    <property type="entry name" value="HflD"/>
</dbReference>
<dbReference type="InterPro" id="IPR035932">
    <property type="entry name" value="HflD-like_sf"/>
</dbReference>
<dbReference type="NCBIfam" id="NF001246">
    <property type="entry name" value="PRK00218.1-2"/>
    <property type="match status" value="1"/>
</dbReference>
<dbReference type="NCBIfam" id="NF001248">
    <property type="entry name" value="PRK00218.1-4"/>
    <property type="match status" value="1"/>
</dbReference>
<dbReference type="NCBIfam" id="NF001249">
    <property type="entry name" value="PRK00218.1-5"/>
    <property type="match status" value="1"/>
</dbReference>
<dbReference type="PANTHER" id="PTHR38100">
    <property type="entry name" value="HIGH FREQUENCY LYSOGENIZATION PROTEIN HFLD"/>
    <property type="match status" value="1"/>
</dbReference>
<dbReference type="PANTHER" id="PTHR38100:SF1">
    <property type="entry name" value="HIGH FREQUENCY LYSOGENIZATION PROTEIN HFLD"/>
    <property type="match status" value="1"/>
</dbReference>
<dbReference type="Pfam" id="PF04356">
    <property type="entry name" value="DUF489"/>
    <property type="match status" value="1"/>
</dbReference>
<dbReference type="SUPFAM" id="SSF101322">
    <property type="entry name" value="YcfC-like"/>
    <property type="match status" value="1"/>
</dbReference>
<proteinExistence type="inferred from homology"/>
<keyword id="KW-0997">Cell inner membrane</keyword>
<keyword id="KW-1003">Cell membrane</keyword>
<keyword id="KW-0175">Coiled coil</keyword>
<keyword id="KW-0963">Cytoplasm</keyword>
<keyword id="KW-0472">Membrane</keyword>